<evidence type="ECO:0000255" key="1">
    <source>
        <dbReference type="HAMAP-Rule" id="MF_00301"/>
    </source>
</evidence>
<name>KHSE_METRJ</name>
<gene>
    <name evidence="1" type="primary">thrB</name>
    <name type="ordered locus">Mrad2831_4313</name>
</gene>
<proteinExistence type="inferred from homology"/>
<sequence>MAVYTEVSDAALAEFLSAYAIGSLLSFKGIAEGVENSNFFLHTTEGAYILTLYEKRVREQDLPFFIGLMEHLSARGLACPQPVRDRAGQALGQLCGRPAAIVSFLEGVSVKAPGAEHCRELGRALAELHAAGRDFPMVRENNLSVSAWRPLFAQAEAQADSVEPGLAARTRSDLAVLEAHWPRDLPGGVIHADLFTDNVFFIGDALSGLIDFYFACTDAFAYDLAVCLNAWCFDPDGTFHRDMAAALIAGYEAVRPLEAAEVAALPILCRGAALRFMLTRLVDWLNVPPGALVKPKDPREFDRRLTFHRQARDARDYGRPH</sequence>
<comment type="catalytic activity">
    <reaction evidence="1">
        <text>L-homoserine + ATP = O-phospho-L-homoserine + ADP + H(+)</text>
        <dbReference type="Rhea" id="RHEA:13985"/>
        <dbReference type="ChEBI" id="CHEBI:15378"/>
        <dbReference type="ChEBI" id="CHEBI:30616"/>
        <dbReference type="ChEBI" id="CHEBI:57476"/>
        <dbReference type="ChEBI" id="CHEBI:57590"/>
        <dbReference type="ChEBI" id="CHEBI:456216"/>
        <dbReference type="EC" id="2.7.1.39"/>
    </reaction>
</comment>
<comment type="pathway">
    <text evidence="1">Amino-acid biosynthesis; L-threonine biosynthesis; L-threonine from L-aspartate: step 4/5.</text>
</comment>
<comment type="similarity">
    <text evidence="1">Belongs to the pseudomonas-type ThrB family.</text>
</comment>
<accession>B1M3E0</accession>
<keyword id="KW-0028">Amino-acid biosynthesis</keyword>
<keyword id="KW-0067">ATP-binding</keyword>
<keyword id="KW-0418">Kinase</keyword>
<keyword id="KW-0547">Nucleotide-binding</keyword>
<keyword id="KW-0791">Threonine biosynthesis</keyword>
<keyword id="KW-0808">Transferase</keyword>
<protein>
    <recommendedName>
        <fullName evidence="1">Homoserine kinase</fullName>
        <shortName evidence="1">HK</shortName>
        <shortName evidence="1">HSK</shortName>
        <ecNumber evidence="1">2.7.1.39</ecNumber>
    </recommendedName>
</protein>
<dbReference type="EC" id="2.7.1.39" evidence="1"/>
<dbReference type="EMBL" id="CP001001">
    <property type="protein sequence ID" value="ACB26280.1"/>
    <property type="molecule type" value="Genomic_DNA"/>
</dbReference>
<dbReference type="RefSeq" id="WP_012321234.1">
    <property type="nucleotide sequence ID" value="NC_010505.1"/>
</dbReference>
<dbReference type="SMR" id="B1M3E0"/>
<dbReference type="STRING" id="426355.Mrad2831_4313"/>
<dbReference type="GeneID" id="6140372"/>
<dbReference type="KEGG" id="mrd:Mrad2831_4313"/>
<dbReference type="PATRIC" id="fig|426355.14.peg.4390"/>
<dbReference type="eggNOG" id="COG2334">
    <property type="taxonomic scope" value="Bacteria"/>
</dbReference>
<dbReference type="HOGENOM" id="CLU_053300_1_0_5"/>
<dbReference type="OrthoDB" id="9777460at2"/>
<dbReference type="UniPathway" id="UPA00050">
    <property type="reaction ID" value="UER00064"/>
</dbReference>
<dbReference type="Proteomes" id="UP000006589">
    <property type="component" value="Chromosome"/>
</dbReference>
<dbReference type="GO" id="GO:0005524">
    <property type="term" value="F:ATP binding"/>
    <property type="evidence" value="ECO:0007669"/>
    <property type="project" value="UniProtKB-KW"/>
</dbReference>
<dbReference type="GO" id="GO:0004413">
    <property type="term" value="F:homoserine kinase activity"/>
    <property type="evidence" value="ECO:0007669"/>
    <property type="project" value="UniProtKB-UniRule"/>
</dbReference>
<dbReference type="GO" id="GO:0009088">
    <property type="term" value="P:threonine biosynthetic process"/>
    <property type="evidence" value="ECO:0007669"/>
    <property type="project" value="UniProtKB-UniRule"/>
</dbReference>
<dbReference type="CDD" id="cd05153">
    <property type="entry name" value="HomoserineK_II"/>
    <property type="match status" value="1"/>
</dbReference>
<dbReference type="Gene3D" id="3.90.1200.10">
    <property type="match status" value="1"/>
</dbReference>
<dbReference type="Gene3D" id="3.30.200.20">
    <property type="entry name" value="Phosphorylase Kinase, domain 1"/>
    <property type="match status" value="1"/>
</dbReference>
<dbReference type="HAMAP" id="MF_00301">
    <property type="entry name" value="Homoser_kinase_2"/>
    <property type="match status" value="1"/>
</dbReference>
<dbReference type="InterPro" id="IPR002575">
    <property type="entry name" value="Aminoglycoside_PTrfase"/>
</dbReference>
<dbReference type="InterPro" id="IPR005280">
    <property type="entry name" value="Homoserine_kinase_II"/>
</dbReference>
<dbReference type="InterPro" id="IPR011009">
    <property type="entry name" value="Kinase-like_dom_sf"/>
</dbReference>
<dbReference type="InterPro" id="IPR050249">
    <property type="entry name" value="Pseudomonas-type_ThrB"/>
</dbReference>
<dbReference type="NCBIfam" id="NF003558">
    <property type="entry name" value="PRK05231.1"/>
    <property type="match status" value="1"/>
</dbReference>
<dbReference type="NCBIfam" id="TIGR00938">
    <property type="entry name" value="thrB_alt"/>
    <property type="match status" value="1"/>
</dbReference>
<dbReference type="PANTHER" id="PTHR21064:SF6">
    <property type="entry name" value="AMINOGLYCOSIDE PHOSPHOTRANSFERASE DOMAIN-CONTAINING PROTEIN"/>
    <property type="match status" value="1"/>
</dbReference>
<dbReference type="PANTHER" id="PTHR21064">
    <property type="entry name" value="AMINOGLYCOSIDE PHOSPHOTRANSFERASE DOMAIN-CONTAINING PROTEIN-RELATED"/>
    <property type="match status" value="1"/>
</dbReference>
<dbReference type="Pfam" id="PF01636">
    <property type="entry name" value="APH"/>
    <property type="match status" value="1"/>
</dbReference>
<dbReference type="SUPFAM" id="SSF56112">
    <property type="entry name" value="Protein kinase-like (PK-like)"/>
    <property type="match status" value="1"/>
</dbReference>
<feature type="chain" id="PRO_1000115434" description="Homoserine kinase">
    <location>
        <begin position="1"/>
        <end position="321"/>
    </location>
</feature>
<reference key="1">
    <citation type="submission" date="2008-03" db="EMBL/GenBank/DDBJ databases">
        <title>Complete sequence of chromosome of Methylobacterium radiotolerans JCM 2831.</title>
        <authorList>
            <consortium name="US DOE Joint Genome Institute"/>
            <person name="Copeland A."/>
            <person name="Lucas S."/>
            <person name="Lapidus A."/>
            <person name="Glavina del Rio T."/>
            <person name="Dalin E."/>
            <person name="Tice H."/>
            <person name="Bruce D."/>
            <person name="Goodwin L."/>
            <person name="Pitluck S."/>
            <person name="Kiss H."/>
            <person name="Brettin T."/>
            <person name="Detter J.C."/>
            <person name="Han C."/>
            <person name="Kuske C.R."/>
            <person name="Schmutz J."/>
            <person name="Larimer F."/>
            <person name="Land M."/>
            <person name="Hauser L."/>
            <person name="Kyrpides N."/>
            <person name="Mikhailova N."/>
            <person name="Marx C.J."/>
            <person name="Richardson P."/>
        </authorList>
    </citation>
    <scope>NUCLEOTIDE SEQUENCE [LARGE SCALE GENOMIC DNA]</scope>
    <source>
        <strain>ATCC 27329 / DSM 1819 / JCM 2831 / NBRC 15690 / NCIMB 10815 / 0-1</strain>
    </source>
</reference>
<organism>
    <name type="scientific">Methylobacterium radiotolerans (strain ATCC 27329 / DSM 1819 / JCM 2831 / NBRC 15690 / NCIMB 10815 / 0-1)</name>
    <dbReference type="NCBI Taxonomy" id="426355"/>
    <lineage>
        <taxon>Bacteria</taxon>
        <taxon>Pseudomonadati</taxon>
        <taxon>Pseudomonadota</taxon>
        <taxon>Alphaproteobacteria</taxon>
        <taxon>Hyphomicrobiales</taxon>
        <taxon>Methylobacteriaceae</taxon>
        <taxon>Methylobacterium</taxon>
    </lineage>
</organism>